<reference key="1">
    <citation type="submission" date="2009-03" db="EMBL/GenBank/DDBJ databases">
        <title>Brucella melitensis ATCC 23457 whole genome shotgun sequencing project.</title>
        <authorList>
            <person name="Setubal J.C."/>
            <person name="Boyle S."/>
            <person name="Crasta O.R."/>
            <person name="Gillespie J.J."/>
            <person name="Kenyon R.W."/>
            <person name="Lu J."/>
            <person name="Mane S."/>
            <person name="Nagrani S."/>
            <person name="Shallom J.M."/>
            <person name="Shallom S."/>
            <person name="Shukla M."/>
            <person name="Snyder E.E."/>
            <person name="Sobral B.W."/>
            <person name="Wattam A.R."/>
            <person name="Will R."/>
            <person name="Williams K."/>
            <person name="Yoo H."/>
            <person name="Munk C."/>
            <person name="Tapia R."/>
            <person name="Han C."/>
            <person name="Detter J.C."/>
            <person name="Bruce D."/>
            <person name="Brettin T.S."/>
        </authorList>
    </citation>
    <scope>NUCLEOTIDE SEQUENCE [LARGE SCALE GENOMIC DNA]</scope>
    <source>
        <strain>ATCC 23457</strain>
    </source>
</reference>
<proteinExistence type="inferred from homology"/>
<dbReference type="EC" id="2.1.1.199" evidence="1"/>
<dbReference type="EMBL" id="CP001488">
    <property type="protein sequence ID" value="ACO01200.1"/>
    <property type="molecule type" value="Genomic_DNA"/>
</dbReference>
<dbReference type="SMR" id="C0RE78"/>
<dbReference type="KEGG" id="bmi:BMEA_A1487"/>
<dbReference type="HOGENOM" id="CLU_038422_1_1_5"/>
<dbReference type="Proteomes" id="UP000001748">
    <property type="component" value="Chromosome I"/>
</dbReference>
<dbReference type="GO" id="GO:0005737">
    <property type="term" value="C:cytoplasm"/>
    <property type="evidence" value="ECO:0007669"/>
    <property type="project" value="UniProtKB-SubCell"/>
</dbReference>
<dbReference type="GO" id="GO:0071424">
    <property type="term" value="F:rRNA (cytosine-N4-)-methyltransferase activity"/>
    <property type="evidence" value="ECO:0007669"/>
    <property type="project" value="UniProtKB-UniRule"/>
</dbReference>
<dbReference type="GO" id="GO:0070475">
    <property type="term" value="P:rRNA base methylation"/>
    <property type="evidence" value="ECO:0007669"/>
    <property type="project" value="UniProtKB-UniRule"/>
</dbReference>
<dbReference type="CDD" id="cd02440">
    <property type="entry name" value="AdoMet_MTases"/>
    <property type="match status" value="1"/>
</dbReference>
<dbReference type="Gene3D" id="1.10.150.170">
    <property type="entry name" value="Putative methyltransferase TM0872, insert domain"/>
    <property type="match status" value="1"/>
</dbReference>
<dbReference type="Gene3D" id="3.40.50.150">
    <property type="entry name" value="Vaccinia Virus protein VP39"/>
    <property type="match status" value="1"/>
</dbReference>
<dbReference type="HAMAP" id="MF_01007">
    <property type="entry name" value="16SrRNA_methyltr_H"/>
    <property type="match status" value="1"/>
</dbReference>
<dbReference type="InterPro" id="IPR002903">
    <property type="entry name" value="RsmH"/>
</dbReference>
<dbReference type="InterPro" id="IPR023397">
    <property type="entry name" value="SAM-dep_MeTrfase_MraW_recog"/>
</dbReference>
<dbReference type="InterPro" id="IPR029063">
    <property type="entry name" value="SAM-dependent_MTases_sf"/>
</dbReference>
<dbReference type="NCBIfam" id="TIGR00006">
    <property type="entry name" value="16S rRNA (cytosine(1402)-N(4))-methyltransferase RsmH"/>
    <property type="match status" value="1"/>
</dbReference>
<dbReference type="PANTHER" id="PTHR11265:SF0">
    <property type="entry name" value="12S RRNA N4-METHYLCYTIDINE METHYLTRANSFERASE"/>
    <property type="match status" value="1"/>
</dbReference>
<dbReference type="PANTHER" id="PTHR11265">
    <property type="entry name" value="S-ADENOSYL-METHYLTRANSFERASE MRAW"/>
    <property type="match status" value="1"/>
</dbReference>
<dbReference type="Pfam" id="PF01795">
    <property type="entry name" value="Methyltransf_5"/>
    <property type="match status" value="1"/>
</dbReference>
<dbReference type="PIRSF" id="PIRSF004486">
    <property type="entry name" value="MraW"/>
    <property type="match status" value="1"/>
</dbReference>
<dbReference type="SUPFAM" id="SSF81799">
    <property type="entry name" value="Putative methyltransferase TM0872, insert domain"/>
    <property type="match status" value="1"/>
</dbReference>
<dbReference type="SUPFAM" id="SSF53335">
    <property type="entry name" value="S-adenosyl-L-methionine-dependent methyltransferases"/>
    <property type="match status" value="1"/>
</dbReference>
<gene>
    <name evidence="1" type="primary">rsmH</name>
    <name type="synonym">mraW</name>
    <name type="ordered locus">BMEA_A1487</name>
</gene>
<sequence>MASLGGDNSQAEGAEVRHVPVLIAEVIDALKPAPGAVIVDGTFGAGGYTRRILETGADVIAIDRDPTAIEAGRAMEKEFPGRLNLVESRFSALDEAVARMSGAGKKVDGVVLDIGVSSMQIDEAERGFSFQKDGPLDMRMSSRGPSAADAVNRLKTGDLARIFNFLGEERHAGRIARMIEKRRAAKPFTRTLDLANAIETLVGRNPKDRIHPATRVFQALRVYVNDELGELARALLAAERILKPGGRLVVVTFHSLEDRMVKRFFADRAGGSAGSRHMPETHMRLPSFTPAVKGAVGPTPEEEERNPRARSAKLRAGIRTENPPLEDDLSLFGLPKLPETNELARS</sequence>
<organism>
    <name type="scientific">Brucella melitensis biotype 2 (strain ATCC 23457)</name>
    <dbReference type="NCBI Taxonomy" id="546272"/>
    <lineage>
        <taxon>Bacteria</taxon>
        <taxon>Pseudomonadati</taxon>
        <taxon>Pseudomonadota</taxon>
        <taxon>Alphaproteobacteria</taxon>
        <taxon>Hyphomicrobiales</taxon>
        <taxon>Brucellaceae</taxon>
        <taxon>Brucella/Ochrobactrum group</taxon>
        <taxon>Brucella</taxon>
    </lineage>
</organism>
<accession>C0RE78</accession>
<keyword id="KW-0963">Cytoplasm</keyword>
<keyword id="KW-0489">Methyltransferase</keyword>
<keyword id="KW-0698">rRNA processing</keyword>
<keyword id="KW-0949">S-adenosyl-L-methionine</keyword>
<keyword id="KW-0808">Transferase</keyword>
<feature type="chain" id="PRO_0000386763" description="Ribosomal RNA small subunit methyltransferase H">
    <location>
        <begin position="1"/>
        <end position="346"/>
    </location>
</feature>
<feature type="region of interest" description="Disordered" evidence="2">
    <location>
        <begin position="270"/>
        <end position="346"/>
    </location>
</feature>
<feature type="binding site" evidence="1">
    <location>
        <begin position="46"/>
        <end position="48"/>
    </location>
    <ligand>
        <name>S-adenosyl-L-methionine</name>
        <dbReference type="ChEBI" id="CHEBI:59789"/>
    </ligand>
</feature>
<feature type="binding site" evidence="1">
    <location>
        <position position="63"/>
    </location>
    <ligand>
        <name>S-adenosyl-L-methionine</name>
        <dbReference type="ChEBI" id="CHEBI:59789"/>
    </ligand>
</feature>
<feature type="binding site" evidence="1">
    <location>
        <position position="90"/>
    </location>
    <ligand>
        <name>S-adenosyl-L-methionine</name>
        <dbReference type="ChEBI" id="CHEBI:59789"/>
    </ligand>
</feature>
<feature type="binding site" evidence="1">
    <location>
        <position position="113"/>
    </location>
    <ligand>
        <name>S-adenosyl-L-methionine</name>
        <dbReference type="ChEBI" id="CHEBI:59789"/>
    </ligand>
</feature>
<feature type="binding site" evidence="1">
    <location>
        <position position="120"/>
    </location>
    <ligand>
        <name>S-adenosyl-L-methionine</name>
        <dbReference type="ChEBI" id="CHEBI:59789"/>
    </ligand>
</feature>
<protein>
    <recommendedName>
        <fullName evidence="1">Ribosomal RNA small subunit methyltransferase H</fullName>
        <ecNumber evidence="1">2.1.1.199</ecNumber>
    </recommendedName>
    <alternativeName>
        <fullName evidence="1">16S rRNA m(4)C1402 methyltransferase</fullName>
    </alternativeName>
    <alternativeName>
        <fullName evidence="1">rRNA (cytosine-N(4)-)-methyltransferase RsmH</fullName>
    </alternativeName>
</protein>
<name>RSMH_BRUMB</name>
<comment type="function">
    <text evidence="1">Specifically methylates the N4 position of cytidine in position 1402 (C1402) of 16S rRNA.</text>
</comment>
<comment type="catalytic activity">
    <reaction evidence="1">
        <text>cytidine(1402) in 16S rRNA + S-adenosyl-L-methionine = N(4)-methylcytidine(1402) in 16S rRNA + S-adenosyl-L-homocysteine + H(+)</text>
        <dbReference type="Rhea" id="RHEA:42928"/>
        <dbReference type="Rhea" id="RHEA-COMP:10286"/>
        <dbReference type="Rhea" id="RHEA-COMP:10287"/>
        <dbReference type="ChEBI" id="CHEBI:15378"/>
        <dbReference type="ChEBI" id="CHEBI:57856"/>
        <dbReference type="ChEBI" id="CHEBI:59789"/>
        <dbReference type="ChEBI" id="CHEBI:74506"/>
        <dbReference type="ChEBI" id="CHEBI:82748"/>
        <dbReference type="EC" id="2.1.1.199"/>
    </reaction>
</comment>
<comment type="subcellular location">
    <subcellularLocation>
        <location evidence="1">Cytoplasm</location>
    </subcellularLocation>
</comment>
<comment type="similarity">
    <text evidence="1">Belongs to the methyltransferase superfamily. RsmH family.</text>
</comment>
<evidence type="ECO:0000255" key="1">
    <source>
        <dbReference type="HAMAP-Rule" id="MF_01007"/>
    </source>
</evidence>
<evidence type="ECO:0000256" key="2">
    <source>
        <dbReference type="SAM" id="MobiDB-lite"/>
    </source>
</evidence>